<gene>
    <name evidence="2" type="primary">mutM</name>
    <name evidence="2" type="synonym">fpg</name>
    <name type="ordered locus">MADE_1000280</name>
</gene>
<keyword id="KW-0227">DNA damage</keyword>
<keyword id="KW-0234">DNA repair</keyword>
<keyword id="KW-0238">DNA-binding</keyword>
<keyword id="KW-0326">Glycosidase</keyword>
<keyword id="KW-0378">Hydrolase</keyword>
<keyword id="KW-0456">Lyase</keyword>
<keyword id="KW-0479">Metal-binding</keyword>
<keyword id="KW-0511">Multifunctional enzyme</keyword>
<keyword id="KW-0862">Zinc</keyword>
<keyword id="KW-0863">Zinc-finger</keyword>
<accession>B4S2C6</accession>
<accession>F2G1V8</accession>
<organism>
    <name type="scientific">Alteromonas mediterranea (strain DSM 17117 / CIP 110805 / LMG 28347 / Deep ecotype)</name>
    <dbReference type="NCBI Taxonomy" id="1774373"/>
    <lineage>
        <taxon>Bacteria</taxon>
        <taxon>Pseudomonadati</taxon>
        <taxon>Pseudomonadota</taxon>
        <taxon>Gammaproteobacteria</taxon>
        <taxon>Alteromonadales</taxon>
        <taxon>Alteromonadaceae</taxon>
        <taxon>Alteromonas/Salinimonas group</taxon>
        <taxon>Alteromonas</taxon>
    </lineage>
</organism>
<feature type="initiator methionine" description="Removed" evidence="1">
    <location>
        <position position="1"/>
    </location>
</feature>
<feature type="chain" id="PRO_1000094029" description="Formamidopyrimidine-DNA glycosylase">
    <location>
        <begin position="2"/>
        <end position="269"/>
    </location>
</feature>
<feature type="zinc finger region" description="FPG-type" evidence="2">
    <location>
        <begin position="235"/>
        <end position="269"/>
    </location>
</feature>
<feature type="active site" description="Schiff-base intermediate with DNA" evidence="2">
    <location>
        <position position="2"/>
    </location>
</feature>
<feature type="active site" description="Proton donor" evidence="2">
    <location>
        <position position="3"/>
    </location>
</feature>
<feature type="active site" description="Proton donor; for beta-elimination activity" evidence="2">
    <location>
        <position position="57"/>
    </location>
</feature>
<feature type="active site" description="Proton donor; for delta-elimination activity" evidence="2">
    <location>
        <position position="259"/>
    </location>
</feature>
<feature type="binding site" evidence="2">
    <location>
        <position position="90"/>
    </location>
    <ligand>
        <name>DNA</name>
        <dbReference type="ChEBI" id="CHEBI:16991"/>
    </ligand>
</feature>
<feature type="binding site" evidence="2">
    <location>
        <position position="109"/>
    </location>
    <ligand>
        <name>DNA</name>
        <dbReference type="ChEBI" id="CHEBI:16991"/>
    </ligand>
</feature>
<feature type="binding site" evidence="2">
    <location>
        <position position="150"/>
    </location>
    <ligand>
        <name>DNA</name>
        <dbReference type="ChEBI" id="CHEBI:16991"/>
    </ligand>
</feature>
<protein>
    <recommendedName>
        <fullName evidence="2">Formamidopyrimidine-DNA glycosylase</fullName>
        <shortName evidence="2">Fapy-DNA glycosylase</shortName>
        <ecNumber evidence="2">3.2.2.23</ecNumber>
    </recommendedName>
    <alternativeName>
        <fullName evidence="2">DNA-(apurinic or apyrimidinic site) lyase MutM</fullName>
        <shortName evidence="2">AP lyase MutM</shortName>
        <ecNumber evidence="2">4.2.99.18</ecNumber>
    </alternativeName>
</protein>
<proteinExistence type="inferred from homology"/>
<reference key="1">
    <citation type="journal article" date="2008" name="ISME J.">
        <title>Comparative genomics of two ecotypes of the marine planktonic copiotroph Alteromonas macleodii suggests alternative lifestyles associated with different kinds of particulate organic matter.</title>
        <authorList>
            <person name="Ivars-Martinez E."/>
            <person name="Martin-Cuadrado A.-B."/>
            <person name="D'Auria G."/>
            <person name="Mira A."/>
            <person name="Ferriera S."/>
            <person name="Johnson J."/>
            <person name="Friedman R."/>
            <person name="Rodriguez-Valera F."/>
        </authorList>
    </citation>
    <scope>NUCLEOTIDE SEQUENCE [LARGE SCALE GENOMIC DNA]</scope>
    <source>
        <strain>DSM 17117 / CIP 110805 / LMG 28347 / Deep ecotype</strain>
    </source>
</reference>
<name>FPG_ALTMD</name>
<comment type="function">
    <text evidence="2">Involved in base excision repair of DNA damaged by oxidation or by mutagenic agents. Acts as a DNA glycosylase that recognizes and removes damaged bases. Has a preference for oxidized purines, such as 7,8-dihydro-8-oxoguanine (8-oxoG). Has AP (apurinic/apyrimidinic) lyase activity and introduces nicks in the DNA strand. Cleaves the DNA backbone by beta-delta elimination to generate a single-strand break at the site of the removed base with both 3'- and 5'-phosphates.</text>
</comment>
<comment type="catalytic activity">
    <reaction evidence="2">
        <text>Hydrolysis of DNA containing ring-opened 7-methylguanine residues, releasing 2,6-diamino-4-hydroxy-5-(N-methyl)formamidopyrimidine.</text>
        <dbReference type="EC" id="3.2.2.23"/>
    </reaction>
</comment>
<comment type="catalytic activity">
    <reaction evidence="2">
        <text>2'-deoxyribonucleotide-(2'-deoxyribose 5'-phosphate)-2'-deoxyribonucleotide-DNA = a 3'-end 2'-deoxyribonucleotide-(2,3-dehydro-2,3-deoxyribose 5'-phosphate)-DNA + a 5'-end 5'-phospho-2'-deoxyribonucleoside-DNA + H(+)</text>
        <dbReference type="Rhea" id="RHEA:66592"/>
        <dbReference type="Rhea" id="RHEA-COMP:13180"/>
        <dbReference type="Rhea" id="RHEA-COMP:16897"/>
        <dbReference type="Rhea" id="RHEA-COMP:17067"/>
        <dbReference type="ChEBI" id="CHEBI:15378"/>
        <dbReference type="ChEBI" id="CHEBI:136412"/>
        <dbReference type="ChEBI" id="CHEBI:157695"/>
        <dbReference type="ChEBI" id="CHEBI:167181"/>
        <dbReference type="EC" id="4.2.99.18"/>
    </reaction>
</comment>
<comment type="cofactor">
    <cofactor evidence="2">
        <name>Zn(2+)</name>
        <dbReference type="ChEBI" id="CHEBI:29105"/>
    </cofactor>
    <text evidence="2">Binds 1 zinc ion per subunit.</text>
</comment>
<comment type="subunit">
    <text evidence="2">Monomer.</text>
</comment>
<comment type="similarity">
    <text evidence="2">Belongs to the FPG family.</text>
</comment>
<evidence type="ECO:0000250" key="1"/>
<evidence type="ECO:0000255" key="2">
    <source>
        <dbReference type="HAMAP-Rule" id="MF_00103"/>
    </source>
</evidence>
<dbReference type="EC" id="3.2.2.23" evidence="2"/>
<dbReference type="EC" id="4.2.99.18" evidence="2"/>
<dbReference type="EMBL" id="CP001103">
    <property type="protein sequence ID" value="AEA96205.1"/>
    <property type="molecule type" value="Genomic_DNA"/>
</dbReference>
<dbReference type="RefSeq" id="WP_012516579.1">
    <property type="nucleotide sequence ID" value="NC_011138.3"/>
</dbReference>
<dbReference type="SMR" id="B4S2C6"/>
<dbReference type="GeneID" id="56340680"/>
<dbReference type="KEGG" id="amc:MADE_1000280"/>
<dbReference type="HOGENOM" id="CLU_038423_1_1_6"/>
<dbReference type="Proteomes" id="UP000001870">
    <property type="component" value="Chromosome"/>
</dbReference>
<dbReference type="GO" id="GO:0034039">
    <property type="term" value="F:8-oxo-7,8-dihydroguanine DNA N-glycosylase activity"/>
    <property type="evidence" value="ECO:0007669"/>
    <property type="project" value="TreeGrafter"/>
</dbReference>
<dbReference type="GO" id="GO:0140078">
    <property type="term" value="F:class I DNA-(apurinic or apyrimidinic site) endonuclease activity"/>
    <property type="evidence" value="ECO:0007669"/>
    <property type="project" value="UniProtKB-EC"/>
</dbReference>
<dbReference type="GO" id="GO:0003684">
    <property type="term" value="F:damaged DNA binding"/>
    <property type="evidence" value="ECO:0007669"/>
    <property type="project" value="InterPro"/>
</dbReference>
<dbReference type="GO" id="GO:0008270">
    <property type="term" value="F:zinc ion binding"/>
    <property type="evidence" value="ECO:0007669"/>
    <property type="project" value="UniProtKB-UniRule"/>
</dbReference>
<dbReference type="GO" id="GO:0006284">
    <property type="term" value="P:base-excision repair"/>
    <property type="evidence" value="ECO:0007669"/>
    <property type="project" value="InterPro"/>
</dbReference>
<dbReference type="CDD" id="cd08966">
    <property type="entry name" value="EcFpg-like_N"/>
    <property type="match status" value="1"/>
</dbReference>
<dbReference type="FunFam" id="1.10.8.50:FF:000003">
    <property type="entry name" value="Formamidopyrimidine-DNA glycosylase"/>
    <property type="match status" value="1"/>
</dbReference>
<dbReference type="FunFam" id="3.20.190.10:FF:000001">
    <property type="entry name" value="Formamidopyrimidine-DNA glycosylase"/>
    <property type="match status" value="1"/>
</dbReference>
<dbReference type="Gene3D" id="1.10.8.50">
    <property type="match status" value="1"/>
</dbReference>
<dbReference type="Gene3D" id="3.20.190.10">
    <property type="entry name" value="MutM-like, N-terminal"/>
    <property type="match status" value="1"/>
</dbReference>
<dbReference type="HAMAP" id="MF_00103">
    <property type="entry name" value="Fapy_DNA_glycosyl"/>
    <property type="match status" value="1"/>
</dbReference>
<dbReference type="InterPro" id="IPR015886">
    <property type="entry name" value="DNA_glyclase/AP_lyase_DNA-bd"/>
</dbReference>
<dbReference type="InterPro" id="IPR015887">
    <property type="entry name" value="DNA_glyclase_Znf_dom_DNA_BS"/>
</dbReference>
<dbReference type="InterPro" id="IPR020629">
    <property type="entry name" value="Formamido-pyr_DNA_Glyclase"/>
</dbReference>
<dbReference type="InterPro" id="IPR012319">
    <property type="entry name" value="FPG_cat"/>
</dbReference>
<dbReference type="InterPro" id="IPR035937">
    <property type="entry name" value="MutM-like_N-ter"/>
</dbReference>
<dbReference type="InterPro" id="IPR010979">
    <property type="entry name" value="Ribosomal_uS13-like_H2TH"/>
</dbReference>
<dbReference type="InterPro" id="IPR000214">
    <property type="entry name" value="Znf_DNA_glyclase/AP_lyase"/>
</dbReference>
<dbReference type="InterPro" id="IPR010663">
    <property type="entry name" value="Znf_FPG/IleRS"/>
</dbReference>
<dbReference type="NCBIfam" id="TIGR00577">
    <property type="entry name" value="fpg"/>
    <property type="match status" value="1"/>
</dbReference>
<dbReference type="NCBIfam" id="NF002211">
    <property type="entry name" value="PRK01103.1"/>
    <property type="match status" value="1"/>
</dbReference>
<dbReference type="PANTHER" id="PTHR22993">
    <property type="entry name" value="FORMAMIDOPYRIMIDINE-DNA GLYCOSYLASE"/>
    <property type="match status" value="1"/>
</dbReference>
<dbReference type="PANTHER" id="PTHR22993:SF9">
    <property type="entry name" value="FORMAMIDOPYRIMIDINE-DNA GLYCOSYLASE"/>
    <property type="match status" value="1"/>
</dbReference>
<dbReference type="Pfam" id="PF01149">
    <property type="entry name" value="Fapy_DNA_glyco"/>
    <property type="match status" value="1"/>
</dbReference>
<dbReference type="Pfam" id="PF06831">
    <property type="entry name" value="H2TH"/>
    <property type="match status" value="1"/>
</dbReference>
<dbReference type="Pfam" id="PF06827">
    <property type="entry name" value="zf-FPG_IleRS"/>
    <property type="match status" value="1"/>
</dbReference>
<dbReference type="SMART" id="SM00898">
    <property type="entry name" value="Fapy_DNA_glyco"/>
    <property type="match status" value="1"/>
</dbReference>
<dbReference type="SMART" id="SM01232">
    <property type="entry name" value="H2TH"/>
    <property type="match status" value="1"/>
</dbReference>
<dbReference type="SUPFAM" id="SSF57716">
    <property type="entry name" value="Glucocorticoid receptor-like (DNA-binding domain)"/>
    <property type="match status" value="1"/>
</dbReference>
<dbReference type="SUPFAM" id="SSF81624">
    <property type="entry name" value="N-terminal domain of MutM-like DNA repair proteins"/>
    <property type="match status" value="1"/>
</dbReference>
<dbReference type="SUPFAM" id="SSF46946">
    <property type="entry name" value="S13-like H2TH domain"/>
    <property type="match status" value="1"/>
</dbReference>
<dbReference type="PROSITE" id="PS51068">
    <property type="entry name" value="FPG_CAT"/>
    <property type="match status" value="1"/>
</dbReference>
<dbReference type="PROSITE" id="PS01242">
    <property type="entry name" value="ZF_FPG_1"/>
    <property type="match status" value="1"/>
</dbReference>
<dbReference type="PROSITE" id="PS51066">
    <property type="entry name" value="ZF_FPG_2"/>
    <property type="match status" value="1"/>
</dbReference>
<sequence length="269" mass="29791">MPELPEVEVSRLGVSPHLIGNTITRVVVRERRMRWPIPQEVAKVEGQKVTAVKRRAKYLLIETAQGTLILHLGMSGKLRVIDASTPVIKHDHVDIVLSTGKCLRFNDPRRFGAVLYQAPDTHIPMLDNLGPEPLTDDFDDTRLFTLSRNRKGPVKNFIMDNAIVVGVGNIYANEALFLAGIDPRRAAGNISAARYKSLTATIKQVLAKAIEQGGTTLKDFAQTDGKPGYFAQHLNVYGRKGEPCEACGKAIESKVIGQRNTFFCTRCQR</sequence>